<reference key="1">
    <citation type="journal article" date="2009" name="BMC Genomics">
        <title>Complete genome sequence of the sugarcane nitrogen-fixing endophyte Gluconacetobacter diazotrophicus Pal5.</title>
        <authorList>
            <person name="Bertalan M."/>
            <person name="Albano R."/>
            <person name="de Padua V."/>
            <person name="Rouws L."/>
            <person name="Rojas C."/>
            <person name="Hemerly A."/>
            <person name="Teixeira K."/>
            <person name="Schwab S."/>
            <person name="Araujo J."/>
            <person name="Oliveira A."/>
            <person name="Franca L."/>
            <person name="Magalhaes V."/>
            <person name="Alqueres S."/>
            <person name="Cardoso A."/>
            <person name="Almeida W."/>
            <person name="Loureiro M.M."/>
            <person name="Nogueira E."/>
            <person name="Cidade D."/>
            <person name="Oliveira D."/>
            <person name="Simao T."/>
            <person name="Macedo J."/>
            <person name="Valadao A."/>
            <person name="Dreschsel M."/>
            <person name="Freitas F."/>
            <person name="Vidal M."/>
            <person name="Guedes H."/>
            <person name="Rodrigues E."/>
            <person name="Meneses C."/>
            <person name="Brioso P."/>
            <person name="Pozzer L."/>
            <person name="Figueiredo D."/>
            <person name="Montano H."/>
            <person name="Junior J."/>
            <person name="de Souza Filho G."/>
            <person name="Martin Quintana Flores V."/>
            <person name="Ferreira B."/>
            <person name="Branco A."/>
            <person name="Gonzalez P."/>
            <person name="Guillobel H."/>
            <person name="Lemos M."/>
            <person name="Seibel L."/>
            <person name="Macedo J."/>
            <person name="Alves-Ferreira M."/>
            <person name="Sachetto-Martins G."/>
            <person name="Coelho A."/>
            <person name="Santos E."/>
            <person name="Amaral G."/>
            <person name="Neves A."/>
            <person name="Pacheco A.B."/>
            <person name="Carvalho D."/>
            <person name="Lery L."/>
            <person name="Bisch P."/>
            <person name="Rossle S.C."/>
            <person name="Urmenyi T."/>
            <person name="Rael Pereira A."/>
            <person name="Silva R."/>
            <person name="Rondinelli E."/>
            <person name="von Kruger W."/>
            <person name="Martins O."/>
            <person name="Baldani J.I."/>
            <person name="Ferreira P.C."/>
        </authorList>
    </citation>
    <scope>NUCLEOTIDE SEQUENCE [LARGE SCALE GENOMIC DNA]</scope>
    <source>
        <strain>ATCC 49037 / DSM 5601 / CCUG 37298 / CIP 103539 / LMG 7603 / PAl5</strain>
    </source>
</reference>
<reference key="2">
    <citation type="journal article" date="2010" name="Stand. Genomic Sci.">
        <title>Two genome sequences of the same bacterial strain, Gluconacetobacter diazotrophicus PAl 5, suggest a new standard in genome sequence submission.</title>
        <authorList>
            <person name="Giongo A."/>
            <person name="Tyler H.L."/>
            <person name="Zipperer U.N."/>
            <person name="Triplett E.W."/>
        </authorList>
    </citation>
    <scope>NUCLEOTIDE SEQUENCE [LARGE SCALE GENOMIC DNA]</scope>
    <source>
        <strain>ATCC 49037 / DSM 5601 / CCUG 37298 / CIP 103539 / LMG 7603 / PAl5</strain>
    </source>
</reference>
<evidence type="ECO:0000255" key="1">
    <source>
        <dbReference type="HAMAP-Rule" id="MF_01369"/>
    </source>
</evidence>
<evidence type="ECO:0000305" key="2"/>
<feature type="chain" id="PRO_1000087219" description="Large ribosomal subunit protein uL23">
    <location>
        <begin position="1"/>
        <end position="98"/>
    </location>
</feature>
<comment type="function">
    <text evidence="1">One of the early assembly proteins it binds 23S rRNA. One of the proteins that surrounds the polypeptide exit tunnel on the outside of the ribosome. Forms the main docking site for trigger factor binding to the ribosome.</text>
</comment>
<comment type="subunit">
    <text evidence="1">Part of the 50S ribosomal subunit. Contacts protein L29, and trigger factor when it is bound to the ribosome.</text>
</comment>
<comment type="similarity">
    <text evidence="1">Belongs to the universal ribosomal protein uL23 family.</text>
</comment>
<comment type="sequence caution" evidence="2">
    <conflict type="erroneous initiation">
        <sequence resource="EMBL-CDS" id="ACI52698"/>
    </conflict>
</comment>
<proteinExistence type="inferred from homology"/>
<keyword id="KW-1185">Reference proteome</keyword>
<keyword id="KW-0687">Ribonucleoprotein</keyword>
<keyword id="KW-0689">Ribosomal protein</keyword>
<keyword id="KW-0694">RNA-binding</keyword>
<keyword id="KW-0699">rRNA-binding</keyword>
<dbReference type="EMBL" id="AM889285">
    <property type="protein sequence ID" value="CAP57345.1"/>
    <property type="molecule type" value="Genomic_DNA"/>
</dbReference>
<dbReference type="EMBL" id="CP001189">
    <property type="protein sequence ID" value="ACI52698.1"/>
    <property type="status" value="ALT_INIT"/>
    <property type="molecule type" value="Genomic_DNA"/>
</dbReference>
<dbReference type="SMR" id="A9H3Q8"/>
<dbReference type="STRING" id="272568.GDI3402"/>
<dbReference type="KEGG" id="gdi:GDI3402"/>
<dbReference type="KEGG" id="gdj:Gdia_2968"/>
<dbReference type="eggNOG" id="COG0089">
    <property type="taxonomic scope" value="Bacteria"/>
</dbReference>
<dbReference type="HOGENOM" id="CLU_037562_3_1_5"/>
<dbReference type="Proteomes" id="UP000001176">
    <property type="component" value="Chromosome"/>
</dbReference>
<dbReference type="GO" id="GO:1990904">
    <property type="term" value="C:ribonucleoprotein complex"/>
    <property type="evidence" value="ECO:0007669"/>
    <property type="project" value="UniProtKB-KW"/>
</dbReference>
<dbReference type="GO" id="GO:0005840">
    <property type="term" value="C:ribosome"/>
    <property type="evidence" value="ECO:0007669"/>
    <property type="project" value="UniProtKB-KW"/>
</dbReference>
<dbReference type="GO" id="GO:0019843">
    <property type="term" value="F:rRNA binding"/>
    <property type="evidence" value="ECO:0007669"/>
    <property type="project" value="UniProtKB-UniRule"/>
</dbReference>
<dbReference type="GO" id="GO:0003735">
    <property type="term" value="F:structural constituent of ribosome"/>
    <property type="evidence" value="ECO:0007669"/>
    <property type="project" value="InterPro"/>
</dbReference>
<dbReference type="GO" id="GO:0006412">
    <property type="term" value="P:translation"/>
    <property type="evidence" value="ECO:0007669"/>
    <property type="project" value="UniProtKB-UniRule"/>
</dbReference>
<dbReference type="FunFam" id="3.30.70.330:FF:000001">
    <property type="entry name" value="50S ribosomal protein L23"/>
    <property type="match status" value="1"/>
</dbReference>
<dbReference type="Gene3D" id="3.30.70.330">
    <property type="match status" value="1"/>
</dbReference>
<dbReference type="HAMAP" id="MF_01369_B">
    <property type="entry name" value="Ribosomal_uL23_B"/>
    <property type="match status" value="1"/>
</dbReference>
<dbReference type="InterPro" id="IPR012677">
    <property type="entry name" value="Nucleotide-bd_a/b_plait_sf"/>
</dbReference>
<dbReference type="InterPro" id="IPR013025">
    <property type="entry name" value="Ribosomal_uL23-like"/>
</dbReference>
<dbReference type="InterPro" id="IPR012678">
    <property type="entry name" value="Ribosomal_uL23/eL15/eS24_sf"/>
</dbReference>
<dbReference type="NCBIfam" id="NF004359">
    <property type="entry name" value="PRK05738.1-3"/>
    <property type="match status" value="1"/>
</dbReference>
<dbReference type="NCBIfam" id="NF004360">
    <property type="entry name" value="PRK05738.1-5"/>
    <property type="match status" value="1"/>
</dbReference>
<dbReference type="NCBIfam" id="NF004363">
    <property type="entry name" value="PRK05738.2-4"/>
    <property type="match status" value="1"/>
</dbReference>
<dbReference type="PANTHER" id="PTHR11620">
    <property type="entry name" value="60S RIBOSOMAL PROTEIN L23A"/>
    <property type="match status" value="1"/>
</dbReference>
<dbReference type="Pfam" id="PF00276">
    <property type="entry name" value="Ribosomal_L23"/>
    <property type="match status" value="1"/>
</dbReference>
<dbReference type="SUPFAM" id="SSF54189">
    <property type="entry name" value="Ribosomal proteins S24e, L23 and L15e"/>
    <property type="match status" value="1"/>
</dbReference>
<protein>
    <recommendedName>
        <fullName evidence="1">Large ribosomal subunit protein uL23</fullName>
    </recommendedName>
    <alternativeName>
        <fullName evidence="2">50S ribosomal protein L23</fullName>
    </alternativeName>
</protein>
<name>RL23_GLUDA</name>
<sequence>MSREAMYDIVRAPLITEKATALSEKNQVAFKVAIDATKPEIKVAVETLFGVKVLGVNTLVQKGKTKRFKGRPGQRSDVKKAFVQLAEGQSIDLTAKLV</sequence>
<accession>A9H3Q8</accession>
<accession>B5ZIG5</accession>
<gene>
    <name evidence="1" type="primary">rplW</name>
    <name type="ordered locus">GDI3402</name>
    <name type="ordered locus">Gdia_2968</name>
</gene>
<organism>
    <name type="scientific">Gluconacetobacter diazotrophicus (strain ATCC 49037 / DSM 5601 / CCUG 37298 / CIP 103539 / LMG 7603 / PAl5)</name>
    <dbReference type="NCBI Taxonomy" id="272568"/>
    <lineage>
        <taxon>Bacteria</taxon>
        <taxon>Pseudomonadati</taxon>
        <taxon>Pseudomonadota</taxon>
        <taxon>Alphaproteobacteria</taxon>
        <taxon>Acetobacterales</taxon>
        <taxon>Acetobacteraceae</taxon>
        <taxon>Gluconacetobacter</taxon>
    </lineage>
</organism>